<proteinExistence type="inferred from homology"/>
<reference key="1">
    <citation type="journal article" date="2009" name="ISME J.">
        <title>The genome sequence of the psychrophilic archaeon, Methanococcoides burtonii: the role of genome evolution in cold adaptation.</title>
        <authorList>
            <person name="Allen M.A."/>
            <person name="Lauro F.M."/>
            <person name="Williams T.J."/>
            <person name="Burg D."/>
            <person name="Siddiqui K.S."/>
            <person name="De Francisci D."/>
            <person name="Chong K.W."/>
            <person name="Pilak O."/>
            <person name="Chew H.H."/>
            <person name="De Maere M.Z."/>
            <person name="Ting L."/>
            <person name="Katrib M."/>
            <person name="Ng C."/>
            <person name="Sowers K.R."/>
            <person name="Galperin M.Y."/>
            <person name="Anderson I.J."/>
            <person name="Ivanova N."/>
            <person name="Dalin E."/>
            <person name="Martinez M."/>
            <person name="Lapidus A."/>
            <person name="Hauser L."/>
            <person name="Land M."/>
            <person name="Thomas T."/>
            <person name="Cavicchioli R."/>
        </authorList>
    </citation>
    <scope>NUCLEOTIDE SEQUENCE [LARGE SCALE GENOMIC DNA]</scope>
    <source>
        <strain>DSM 6242 / NBRC 107633 / OCM 468 / ACE-M</strain>
    </source>
</reference>
<protein>
    <recommendedName>
        <fullName evidence="1">Large ribosomal subunit protein uL13</fullName>
    </recommendedName>
    <alternativeName>
        <fullName evidence="2">50S ribosomal protein L13</fullName>
    </alternativeName>
</protein>
<sequence>MTVIDANGLIMGRLASNVAKMLLSGEEVSIVNAERAVISGSKVTTFEEYDVIRNMGTREFGPYFPRRPDRILKRTVRGMLPYKRARGKDAMGRLKVYVGIPYEYQDAEFVSVEGAEMTRLSSNKYVTIGDVSRQLGSKF</sequence>
<gene>
    <name evidence="1" type="primary">rpl13</name>
    <name type="ordered locus">Mbur_2389</name>
</gene>
<accession>Q12TI6</accession>
<feature type="chain" id="PRO_0000261837" description="Large ribosomal subunit protein uL13">
    <location>
        <begin position="1"/>
        <end position="139"/>
    </location>
</feature>
<keyword id="KW-0687">Ribonucleoprotein</keyword>
<keyword id="KW-0689">Ribosomal protein</keyword>
<name>RL13_METBU</name>
<evidence type="ECO:0000255" key="1">
    <source>
        <dbReference type="HAMAP-Rule" id="MF_01366"/>
    </source>
</evidence>
<evidence type="ECO:0000305" key="2"/>
<organism>
    <name type="scientific">Methanococcoides burtonii (strain DSM 6242 / NBRC 107633 / OCM 468 / ACE-M)</name>
    <dbReference type="NCBI Taxonomy" id="259564"/>
    <lineage>
        <taxon>Archaea</taxon>
        <taxon>Methanobacteriati</taxon>
        <taxon>Methanobacteriota</taxon>
        <taxon>Stenosarchaea group</taxon>
        <taxon>Methanomicrobia</taxon>
        <taxon>Methanosarcinales</taxon>
        <taxon>Methanosarcinaceae</taxon>
        <taxon>Methanococcoides</taxon>
    </lineage>
</organism>
<comment type="function">
    <text evidence="1">This protein is one of the early assembly proteins of the 50S ribosomal subunit, although it is not seen to bind rRNA by itself. It is important during the early stages of 50S assembly.</text>
</comment>
<comment type="subunit">
    <text evidence="1">Part of the 50S ribosomal subunit.</text>
</comment>
<comment type="similarity">
    <text evidence="1">Belongs to the universal ribosomal protein uL13 family.</text>
</comment>
<dbReference type="EMBL" id="CP000300">
    <property type="protein sequence ID" value="ABE53240.1"/>
    <property type="molecule type" value="Genomic_DNA"/>
</dbReference>
<dbReference type="RefSeq" id="WP_011500375.1">
    <property type="nucleotide sequence ID" value="NC_007955.1"/>
</dbReference>
<dbReference type="SMR" id="Q12TI6"/>
<dbReference type="STRING" id="259564.Mbur_2389"/>
<dbReference type="GeneID" id="3998976"/>
<dbReference type="KEGG" id="mbu:Mbur_2389"/>
<dbReference type="HOGENOM" id="CLU_076922_1_0_2"/>
<dbReference type="OrthoDB" id="7668at2157"/>
<dbReference type="Proteomes" id="UP000001979">
    <property type="component" value="Chromosome"/>
</dbReference>
<dbReference type="GO" id="GO:0022625">
    <property type="term" value="C:cytosolic large ribosomal subunit"/>
    <property type="evidence" value="ECO:0007669"/>
    <property type="project" value="TreeGrafter"/>
</dbReference>
<dbReference type="GO" id="GO:0003729">
    <property type="term" value="F:mRNA binding"/>
    <property type="evidence" value="ECO:0007669"/>
    <property type="project" value="TreeGrafter"/>
</dbReference>
<dbReference type="GO" id="GO:0003735">
    <property type="term" value="F:structural constituent of ribosome"/>
    <property type="evidence" value="ECO:0007669"/>
    <property type="project" value="InterPro"/>
</dbReference>
<dbReference type="GO" id="GO:0017148">
    <property type="term" value="P:negative regulation of translation"/>
    <property type="evidence" value="ECO:0007669"/>
    <property type="project" value="TreeGrafter"/>
</dbReference>
<dbReference type="GO" id="GO:0006412">
    <property type="term" value="P:translation"/>
    <property type="evidence" value="ECO:0007669"/>
    <property type="project" value="UniProtKB-UniRule"/>
</dbReference>
<dbReference type="CDD" id="cd00392">
    <property type="entry name" value="Ribosomal_L13"/>
    <property type="match status" value="1"/>
</dbReference>
<dbReference type="FunFam" id="3.90.1180.10:FF:000012">
    <property type="entry name" value="50S ribosomal protein L13"/>
    <property type="match status" value="1"/>
</dbReference>
<dbReference type="Gene3D" id="3.90.1180.10">
    <property type="entry name" value="Ribosomal protein L13"/>
    <property type="match status" value="1"/>
</dbReference>
<dbReference type="HAMAP" id="MF_01366">
    <property type="entry name" value="Ribosomal_uL13"/>
    <property type="match status" value="1"/>
</dbReference>
<dbReference type="InterPro" id="IPR005822">
    <property type="entry name" value="Ribosomal_uL13"/>
</dbReference>
<dbReference type="InterPro" id="IPR005823">
    <property type="entry name" value="Ribosomal_uL13_bac-type"/>
</dbReference>
<dbReference type="InterPro" id="IPR023563">
    <property type="entry name" value="Ribosomal_uL13_CS"/>
</dbReference>
<dbReference type="InterPro" id="IPR005755">
    <property type="entry name" value="Ribosomal_uL13_euk/arc"/>
</dbReference>
<dbReference type="InterPro" id="IPR036899">
    <property type="entry name" value="Ribosomal_uL13_sf"/>
</dbReference>
<dbReference type="NCBIfam" id="TIGR01077">
    <property type="entry name" value="L13_A_E"/>
    <property type="match status" value="1"/>
</dbReference>
<dbReference type="NCBIfam" id="NF005004">
    <property type="entry name" value="PRK06394.1"/>
    <property type="match status" value="1"/>
</dbReference>
<dbReference type="PANTHER" id="PTHR11545:SF3">
    <property type="entry name" value="LARGE RIBOSOMAL SUBUNIT PROTEIN UL13"/>
    <property type="match status" value="1"/>
</dbReference>
<dbReference type="PANTHER" id="PTHR11545">
    <property type="entry name" value="RIBOSOMAL PROTEIN L13"/>
    <property type="match status" value="1"/>
</dbReference>
<dbReference type="Pfam" id="PF00572">
    <property type="entry name" value="Ribosomal_L13"/>
    <property type="match status" value="1"/>
</dbReference>
<dbReference type="PIRSF" id="PIRSF002181">
    <property type="entry name" value="Ribosomal_L13"/>
    <property type="match status" value="1"/>
</dbReference>
<dbReference type="SUPFAM" id="SSF52161">
    <property type="entry name" value="Ribosomal protein L13"/>
    <property type="match status" value="1"/>
</dbReference>
<dbReference type="PROSITE" id="PS00783">
    <property type="entry name" value="RIBOSOMAL_L13"/>
    <property type="match status" value="1"/>
</dbReference>